<keyword id="KW-0878">Amphibian defense peptide</keyword>
<keyword id="KW-0044">Antibiotic</keyword>
<keyword id="KW-0929">Antimicrobial</keyword>
<keyword id="KW-0903">Direct protein sequencing</keyword>
<keyword id="KW-0964">Secreted</keyword>
<accession>C0HJB8</accession>
<dbReference type="GO" id="GO:0005576">
    <property type="term" value="C:extracellular region"/>
    <property type="evidence" value="ECO:0007669"/>
    <property type="project" value="UniProtKB-SubCell"/>
</dbReference>
<dbReference type="GO" id="GO:0042742">
    <property type="term" value="P:defense response to bacterium"/>
    <property type="evidence" value="ECO:0007669"/>
    <property type="project" value="UniProtKB-KW"/>
</dbReference>
<feature type="peptide" id="PRO_0000422917" description="Cyanophlyctin" evidence="3">
    <location>
        <begin position="1"/>
        <end position="21"/>
    </location>
</feature>
<sequence>FLNALKNFAKTAGKRLKSLLN</sequence>
<evidence type="ECO:0000255" key="1"/>
<evidence type="ECO:0000269" key="2">
    <source ref="1"/>
</evidence>
<evidence type="ECO:0000303" key="3">
    <source ref="1"/>
</evidence>
<evidence type="ECO:0000305" key="4"/>
<evidence type="ECO:0000305" key="5">
    <source ref="1"/>
</evidence>
<reference evidence="4" key="1">
    <citation type="journal article" date="2012" name="Int. J. Pept. Res. Ther.">
        <title>Identification and characterization of novel antibacterial peptides from skin secretions of Euphlyctis cyanophlyctis.</title>
        <authorList>
            <person name="Asoodeh A."/>
            <person name="Ghorani-Azam A."/>
            <person name="Chamani J.K."/>
        </authorList>
    </citation>
    <scope>PROTEIN SEQUENCE</scope>
    <scope>FUNCTION</scope>
    <scope>SUBCELLULAR LOCATION</scope>
    <scope>MASS SPECTROMETRY</scope>
    <source>
        <tissue evidence="2">Skin secretion</tissue>
    </source>
</reference>
<comment type="function">
    <text evidence="2">Has antibacterial activity against E.coli HP101BA (MIC=6.4 uM), K.pneumoniae PTCC1388 (MIC=7.3 uM), M.luteus PTCC1625 (MIC=4.7 uM) and S.aureus PTCC1431 (MIC=5.3 uM). Has no or very limited (&lt;3%) hemolytic activity at concentrations of 15 ug/ml and 60 ug/ml, respectively.</text>
</comment>
<comment type="subcellular location">
    <subcellularLocation>
        <location evidence="2">Secreted</location>
    </subcellularLocation>
</comment>
<comment type="tissue specificity">
    <text evidence="5">Expressed by the skin glands.</text>
</comment>
<comment type="mass spectrometry"/>
<comment type="similarity">
    <text evidence="1">Belongs to the frog skin active peptide (FSAP) family. Brevinin subfamily.</text>
</comment>
<name>CPHN_EUPCP</name>
<protein>
    <recommendedName>
        <fullName evidence="3">Cyanophlyctin</fullName>
    </recommendedName>
</protein>
<organism>
    <name type="scientific">Euphlyctis cyanophlyctis</name>
    <name type="common">Skittering frog</name>
    <dbReference type="NCBI Taxonomy" id="58519"/>
    <lineage>
        <taxon>Eukaryota</taxon>
        <taxon>Metazoa</taxon>
        <taxon>Chordata</taxon>
        <taxon>Craniata</taxon>
        <taxon>Vertebrata</taxon>
        <taxon>Euteleostomi</taxon>
        <taxon>Amphibia</taxon>
        <taxon>Batrachia</taxon>
        <taxon>Anura</taxon>
        <taxon>Neobatrachia</taxon>
        <taxon>Ranoidea</taxon>
        <taxon>Dicroglossidae</taxon>
        <taxon>Dicroglossinae</taxon>
        <taxon>Euphlyctis</taxon>
    </lineage>
</organism>
<proteinExistence type="evidence at protein level"/>